<keyword id="KW-0963">Cytoplasm</keyword>
<keyword id="KW-0479">Metal-binding</keyword>
<keyword id="KW-0520">NAD</keyword>
<keyword id="KW-0560">Oxidoreductase</keyword>
<keyword id="KW-0862">Zinc</keyword>
<feature type="chain" id="PRO_1000130539" description="L-threonine 3-dehydrogenase">
    <location>
        <begin position="1"/>
        <end position="342"/>
    </location>
</feature>
<feature type="active site" description="Charge relay system" evidence="1">
    <location>
        <position position="40"/>
    </location>
</feature>
<feature type="active site" description="Charge relay system" evidence="1">
    <location>
        <position position="43"/>
    </location>
</feature>
<feature type="binding site" evidence="1">
    <location>
        <position position="38"/>
    </location>
    <ligand>
        <name>Zn(2+)</name>
        <dbReference type="ChEBI" id="CHEBI:29105"/>
        <label>1</label>
        <note>catalytic</note>
    </ligand>
</feature>
<feature type="binding site" evidence="1">
    <location>
        <position position="63"/>
    </location>
    <ligand>
        <name>Zn(2+)</name>
        <dbReference type="ChEBI" id="CHEBI:29105"/>
        <label>1</label>
        <note>catalytic</note>
    </ligand>
</feature>
<feature type="binding site" evidence="1">
    <location>
        <position position="64"/>
    </location>
    <ligand>
        <name>Zn(2+)</name>
        <dbReference type="ChEBI" id="CHEBI:29105"/>
        <label>1</label>
        <note>catalytic</note>
    </ligand>
</feature>
<feature type="binding site" evidence="1">
    <location>
        <position position="93"/>
    </location>
    <ligand>
        <name>Zn(2+)</name>
        <dbReference type="ChEBI" id="CHEBI:29105"/>
        <label>2</label>
    </ligand>
</feature>
<feature type="binding site" evidence="1">
    <location>
        <position position="96"/>
    </location>
    <ligand>
        <name>Zn(2+)</name>
        <dbReference type="ChEBI" id="CHEBI:29105"/>
        <label>2</label>
    </ligand>
</feature>
<feature type="binding site" evidence="1">
    <location>
        <position position="99"/>
    </location>
    <ligand>
        <name>Zn(2+)</name>
        <dbReference type="ChEBI" id="CHEBI:29105"/>
        <label>2</label>
    </ligand>
</feature>
<feature type="binding site" evidence="1">
    <location>
        <position position="107"/>
    </location>
    <ligand>
        <name>Zn(2+)</name>
        <dbReference type="ChEBI" id="CHEBI:29105"/>
        <label>2</label>
    </ligand>
</feature>
<feature type="binding site" evidence="1">
    <location>
        <position position="175"/>
    </location>
    <ligand>
        <name>NAD(+)</name>
        <dbReference type="ChEBI" id="CHEBI:57540"/>
    </ligand>
</feature>
<feature type="binding site" evidence="1">
    <location>
        <position position="195"/>
    </location>
    <ligand>
        <name>NAD(+)</name>
        <dbReference type="ChEBI" id="CHEBI:57540"/>
    </ligand>
</feature>
<feature type="binding site" evidence="1">
    <location>
        <position position="200"/>
    </location>
    <ligand>
        <name>NAD(+)</name>
        <dbReference type="ChEBI" id="CHEBI:57540"/>
    </ligand>
</feature>
<feature type="binding site" evidence="1">
    <location>
        <begin position="262"/>
        <end position="264"/>
    </location>
    <ligand>
        <name>NAD(+)</name>
        <dbReference type="ChEBI" id="CHEBI:57540"/>
    </ligand>
</feature>
<feature type="binding site" evidence="1">
    <location>
        <begin position="286"/>
        <end position="287"/>
    </location>
    <ligand>
        <name>NAD(+)</name>
        <dbReference type="ChEBI" id="CHEBI:57540"/>
    </ligand>
</feature>
<feature type="site" description="Important for catalytic activity for the proton relay mechanism but does not participate directly in the coordination of zinc atom" evidence="1">
    <location>
        <position position="148"/>
    </location>
</feature>
<protein>
    <recommendedName>
        <fullName evidence="1">L-threonine 3-dehydrogenase</fullName>
        <shortName evidence="1">TDH</shortName>
        <ecNumber evidence="1">1.1.1.103</ecNumber>
    </recommendedName>
</protein>
<evidence type="ECO:0000255" key="1">
    <source>
        <dbReference type="HAMAP-Rule" id="MF_00627"/>
    </source>
</evidence>
<accession>B4EFZ7</accession>
<sequence length="342" mass="37386">MKALAKLERGPGLTLTRVKRPEVGHNDVLIKIRRTAICGTDIHIWKWDDWAQKTIPVPMHVGHEYVGEIVEMGQEVRGFAIGDRVSGEGHITCGFCRNCRAGRRHLCRNTVGVGVNREGAFAEYLAIPAFNAFKIPPEISDDLASIFDPFGNATHTALSFNLVGEDVLITGAGPIGIMAVAIAKHVGARNVVITDINDYRLELARKMGATRAVNVARESLRDVMADLHMTEGFDVGLEMSGVPSAFTSLLEAMNHGGKVALLGIPPAQTAIDWNQVIFKGLEIKGIYGREMFETWYKMVAMLQSGLDLSPIITHRFAADDYEQGFAAMLSGESGKVILDWTV</sequence>
<gene>
    <name evidence="1" type="primary">tdh</name>
    <name type="ordered locus">BceJ2315_34810</name>
    <name type="ORF">BCAM0011</name>
</gene>
<comment type="function">
    <text evidence="1">Catalyzes the NAD(+)-dependent oxidation of L-threonine to 2-amino-3-ketobutyrate.</text>
</comment>
<comment type="catalytic activity">
    <reaction evidence="1">
        <text>L-threonine + NAD(+) = (2S)-2-amino-3-oxobutanoate + NADH + H(+)</text>
        <dbReference type="Rhea" id="RHEA:13161"/>
        <dbReference type="ChEBI" id="CHEBI:15378"/>
        <dbReference type="ChEBI" id="CHEBI:57540"/>
        <dbReference type="ChEBI" id="CHEBI:57926"/>
        <dbReference type="ChEBI" id="CHEBI:57945"/>
        <dbReference type="ChEBI" id="CHEBI:78948"/>
        <dbReference type="EC" id="1.1.1.103"/>
    </reaction>
</comment>
<comment type="cofactor">
    <cofactor evidence="1">
        <name>Zn(2+)</name>
        <dbReference type="ChEBI" id="CHEBI:29105"/>
    </cofactor>
    <text evidence="1">Binds 2 Zn(2+) ions per subunit.</text>
</comment>
<comment type="pathway">
    <text evidence="1">Amino-acid degradation; L-threonine degradation via oxydo-reductase pathway; glycine from L-threonine: step 1/2.</text>
</comment>
<comment type="subunit">
    <text evidence="1">Homotetramer.</text>
</comment>
<comment type="subcellular location">
    <subcellularLocation>
        <location evidence="1">Cytoplasm</location>
    </subcellularLocation>
</comment>
<comment type="similarity">
    <text evidence="1">Belongs to the zinc-containing alcohol dehydrogenase family.</text>
</comment>
<organism>
    <name type="scientific">Burkholderia cenocepacia (strain ATCC BAA-245 / DSM 16553 / LMG 16656 / NCTC 13227 / J2315 / CF5610)</name>
    <name type="common">Burkholderia cepacia (strain J2315)</name>
    <dbReference type="NCBI Taxonomy" id="216591"/>
    <lineage>
        <taxon>Bacteria</taxon>
        <taxon>Pseudomonadati</taxon>
        <taxon>Pseudomonadota</taxon>
        <taxon>Betaproteobacteria</taxon>
        <taxon>Burkholderiales</taxon>
        <taxon>Burkholderiaceae</taxon>
        <taxon>Burkholderia</taxon>
        <taxon>Burkholderia cepacia complex</taxon>
    </lineage>
</organism>
<dbReference type="EC" id="1.1.1.103" evidence="1"/>
<dbReference type="EMBL" id="AM747721">
    <property type="protein sequence ID" value="CAR53866.1"/>
    <property type="molecule type" value="Genomic_DNA"/>
</dbReference>
<dbReference type="RefSeq" id="WP_006480187.1">
    <property type="nucleotide sequence ID" value="NC_011001.1"/>
</dbReference>
<dbReference type="SMR" id="B4EFZ7"/>
<dbReference type="GeneID" id="56560720"/>
<dbReference type="KEGG" id="bcj:BCAM0011"/>
<dbReference type="eggNOG" id="COG1063">
    <property type="taxonomic scope" value="Bacteria"/>
</dbReference>
<dbReference type="HOGENOM" id="CLU_026673_11_0_4"/>
<dbReference type="BioCyc" id="BCEN216591:G1G1V-3944-MONOMER"/>
<dbReference type="UniPathway" id="UPA00046">
    <property type="reaction ID" value="UER00505"/>
</dbReference>
<dbReference type="Proteomes" id="UP000001035">
    <property type="component" value="Chromosome 2"/>
</dbReference>
<dbReference type="GO" id="GO:0005737">
    <property type="term" value="C:cytoplasm"/>
    <property type="evidence" value="ECO:0007669"/>
    <property type="project" value="UniProtKB-SubCell"/>
</dbReference>
<dbReference type="GO" id="GO:0008743">
    <property type="term" value="F:L-threonine 3-dehydrogenase activity"/>
    <property type="evidence" value="ECO:0007669"/>
    <property type="project" value="UniProtKB-UniRule"/>
</dbReference>
<dbReference type="GO" id="GO:0008270">
    <property type="term" value="F:zinc ion binding"/>
    <property type="evidence" value="ECO:0007669"/>
    <property type="project" value="UniProtKB-UniRule"/>
</dbReference>
<dbReference type="GO" id="GO:0019518">
    <property type="term" value="P:L-threonine catabolic process to glycine"/>
    <property type="evidence" value="ECO:0007669"/>
    <property type="project" value="UniProtKB-UniPathway"/>
</dbReference>
<dbReference type="Gene3D" id="3.90.180.10">
    <property type="entry name" value="Medium-chain alcohol dehydrogenases, catalytic domain"/>
    <property type="match status" value="1"/>
</dbReference>
<dbReference type="Gene3D" id="3.40.50.720">
    <property type="entry name" value="NAD(P)-binding Rossmann-like Domain"/>
    <property type="match status" value="1"/>
</dbReference>
<dbReference type="HAMAP" id="MF_00627">
    <property type="entry name" value="Thr_dehydrog"/>
    <property type="match status" value="1"/>
</dbReference>
<dbReference type="InterPro" id="IPR013149">
    <property type="entry name" value="ADH-like_C"/>
</dbReference>
<dbReference type="InterPro" id="IPR013154">
    <property type="entry name" value="ADH-like_N"/>
</dbReference>
<dbReference type="InterPro" id="IPR002328">
    <property type="entry name" value="ADH_Zn_CS"/>
</dbReference>
<dbReference type="InterPro" id="IPR011032">
    <property type="entry name" value="GroES-like_sf"/>
</dbReference>
<dbReference type="InterPro" id="IPR004627">
    <property type="entry name" value="L-Threonine_3-DHase"/>
</dbReference>
<dbReference type="InterPro" id="IPR036291">
    <property type="entry name" value="NAD(P)-bd_dom_sf"/>
</dbReference>
<dbReference type="InterPro" id="IPR020843">
    <property type="entry name" value="PKS_ER"/>
</dbReference>
<dbReference type="InterPro" id="IPR050129">
    <property type="entry name" value="Zn_alcohol_dh"/>
</dbReference>
<dbReference type="NCBIfam" id="NF003808">
    <property type="entry name" value="PRK05396.1"/>
    <property type="match status" value="1"/>
</dbReference>
<dbReference type="NCBIfam" id="TIGR00692">
    <property type="entry name" value="tdh"/>
    <property type="match status" value="1"/>
</dbReference>
<dbReference type="PANTHER" id="PTHR43401">
    <property type="entry name" value="L-THREONINE 3-DEHYDROGENASE"/>
    <property type="match status" value="1"/>
</dbReference>
<dbReference type="PANTHER" id="PTHR43401:SF2">
    <property type="entry name" value="L-THREONINE 3-DEHYDROGENASE"/>
    <property type="match status" value="1"/>
</dbReference>
<dbReference type="Pfam" id="PF08240">
    <property type="entry name" value="ADH_N"/>
    <property type="match status" value="1"/>
</dbReference>
<dbReference type="Pfam" id="PF00107">
    <property type="entry name" value="ADH_zinc_N"/>
    <property type="match status" value="1"/>
</dbReference>
<dbReference type="SMART" id="SM00829">
    <property type="entry name" value="PKS_ER"/>
    <property type="match status" value="1"/>
</dbReference>
<dbReference type="SUPFAM" id="SSF50129">
    <property type="entry name" value="GroES-like"/>
    <property type="match status" value="1"/>
</dbReference>
<dbReference type="SUPFAM" id="SSF51735">
    <property type="entry name" value="NAD(P)-binding Rossmann-fold domains"/>
    <property type="match status" value="1"/>
</dbReference>
<dbReference type="PROSITE" id="PS00059">
    <property type="entry name" value="ADH_ZINC"/>
    <property type="match status" value="1"/>
</dbReference>
<proteinExistence type="inferred from homology"/>
<name>TDH_BURCJ</name>
<reference key="1">
    <citation type="journal article" date="2009" name="J. Bacteriol.">
        <title>The genome of Burkholderia cenocepacia J2315, an epidemic pathogen of cystic fibrosis patients.</title>
        <authorList>
            <person name="Holden M.T."/>
            <person name="Seth-Smith H.M."/>
            <person name="Crossman L.C."/>
            <person name="Sebaihia M."/>
            <person name="Bentley S.D."/>
            <person name="Cerdeno-Tarraga A.M."/>
            <person name="Thomson N.R."/>
            <person name="Bason N."/>
            <person name="Quail M.A."/>
            <person name="Sharp S."/>
            <person name="Cherevach I."/>
            <person name="Churcher C."/>
            <person name="Goodhead I."/>
            <person name="Hauser H."/>
            <person name="Holroyd N."/>
            <person name="Mungall K."/>
            <person name="Scott P."/>
            <person name="Walker D."/>
            <person name="White B."/>
            <person name="Rose H."/>
            <person name="Iversen P."/>
            <person name="Mil-Homens D."/>
            <person name="Rocha E.P."/>
            <person name="Fialho A.M."/>
            <person name="Baldwin A."/>
            <person name="Dowson C."/>
            <person name="Barrell B.G."/>
            <person name="Govan J.R."/>
            <person name="Vandamme P."/>
            <person name="Hart C.A."/>
            <person name="Mahenthiralingam E."/>
            <person name="Parkhill J."/>
        </authorList>
    </citation>
    <scope>NUCLEOTIDE SEQUENCE [LARGE SCALE GENOMIC DNA]</scope>
    <source>
        <strain>ATCC BAA-245 / DSM 16553 / LMG 16656 / NCTC 13227 / J2315 / CF5610</strain>
    </source>
</reference>